<sequence>MSRVSEYGVPEGVRESDSDTDSVFMYQHTELMQNNASPLVVRARPPAVLIPLVDVPRPRSRRKASAQLKMQMDRLCNVLGVVLQMATLALVTYIAFVVHTRATSCKRE</sequence>
<name>ORF1_VZVO</name>
<organismHost>
    <name type="scientific">Homo sapiens</name>
    <name type="common">Human</name>
    <dbReference type="NCBI Taxonomy" id="9606"/>
</organismHost>
<organism>
    <name type="scientific">Varicella-zoster virus (strain Oka vaccine)</name>
    <name type="common">HHV-3</name>
    <name type="synonym">Human herpesvirus 3</name>
    <dbReference type="NCBI Taxonomy" id="341980"/>
    <lineage>
        <taxon>Viruses</taxon>
        <taxon>Duplodnaviria</taxon>
        <taxon>Heunggongvirae</taxon>
        <taxon>Peploviricota</taxon>
        <taxon>Herviviricetes</taxon>
        <taxon>Herpesvirales</taxon>
        <taxon>Orthoherpesviridae</taxon>
        <taxon>Alphaherpesvirinae</taxon>
        <taxon>Varicellovirus</taxon>
        <taxon>Varicellovirus humanalpha3</taxon>
        <taxon>Human herpesvirus 3</taxon>
    </lineage>
</organism>
<feature type="chain" id="PRO_0000385143" description="Structural protein 1">
    <location>
        <begin position="1"/>
        <end position="108"/>
    </location>
</feature>
<feature type="topological domain" description="Intravirion" evidence="3">
    <location>
        <begin position="1"/>
        <end position="77"/>
    </location>
</feature>
<feature type="transmembrane region" description="Helical; Signal-anchor for type II membrane protein" evidence="2">
    <location>
        <begin position="78"/>
        <end position="98"/>
    </location>
</feature>
<feature type="topological domain" description="Virion surface" evidence="3">
    <location>
        <begin position="99"/>
        <end position="108"/>
    </location>
</feature>
<protein>
    <recommendedName>
        <fullName>Structural protein 1</fullName>
    </recommendedName>
    <alternativeName>
        <fullName>Structural ORF1 protein</fullName>
    </alternativeName>
</protein>
<evidence type="ECO:0000250" key="1"/>
<evidence type="ECO:0000255" key="2"/>
<evidence type="ECO:0000269" key="3">
    <source>
    </source>
</evidence>
<evidence type="ECO:0000305" key="4"/>
<dbReference type="EMBL" id="AB097932">
    <property type="status" value="NOT_ANNOTATED_CDS"/>
    <property type="molecule type" value="Genomic_DNA"/>
</dbReference>
<dbReference type="EMBL" id="AB097933">
    <property type="status" value="NOT_ANNOTATED_CDS"/>
    <property type="molecule type" value="Genomic_DNA"/>
</dbReference>
<dbReference type="EMBL" id="DQ008354">
    <property type="protein sequence ID" value="AAY57620.1"/>
    <property type="molecule type" value="Genomic_DNA"/>
</dbReference>
<dbReference type="EMBL" id="DQ008355">
    <property type="protein sequence ID" value="AAY57691.1"/>
    <property type="molecule type" value="Genomic_DNA"/>
</dbReference>
<dbReference type="SMR" id="Q4JQX4"/>
<dbReference type="IntAct" id="Q4JQX4">
    <property type="interactions" value="8"/>
</dbReference>
<dbReference type="MINT" id="Q4JQX4"/>
<dbReference type="Proteomes" id="UP000002603">
    <property type="component" value="Genome"/>
</dbReference>
<dbReference type="Proteomes" id="UP000008504">
    <property type="component" value="Genome"/>
</dbReference>
<dbReference type="Proteomes" id="UP000008505">
    <property type="component" value="Genome"/>
</dbReference>
<dbReference type="Proteomes" id="UP000008506">
    <property type="component" value="Genome"/>
</dbReference>
<dbReference type="GO" id="GO:0044178">
    <property type="term" value="C:host cell Golgi membrane"/>
    <property type="evidence" value="ECO:0007669"/>
    <property type="project" value="UniProtKB-SubCell"/>
</dbReference>
<dbReference type="GO" id="GO:0016020">
    <property type="term" value="C:membrane"/>
    <property type="evidence" value="ECO:0007669"/>
    <property type="project" value="UniProtKB-KW"/>
</dbReference>
<dbReference type="GO" id="GO:0055036">
    <property type="term" value="C:virion membrane"/>
    <property type="evidence" value="ECO:0007669"/>
    <property type="project" value="UniProtKB-SubCell"/>
</dbReference>
<keyword id="KW-1040">Host Golgi apparatus</keyword>
<keyword id="KW-1043">Host membrane</keyword>
<keyword id="KW-0472">Membrane</keyword>
<keyword id="KW-0597">Phosphoprotein</keyword>
<keyword id="KW-0735">Signal-anchor</keyword>
<keyword id="KW-0812">Transmembrane</keyword>
<keyword id="KW-1133">Transmembrane helix</keyword>
<keyword id="KW-0946">Virion</keyword>
<reference key="1">
    <citation type="journal article" date="2002" name="J. Virol.">
        <title>Comparison of the complete DNA sequences of the Oka varicella vaccine and its parental virus.</title>
        <authorList>
            <person name="Gomi Y."/>
            <person name="Sunamachi H."/>
            <person name="Mori Y."/>
            <person name="Nagaike K."/>
            <person name="Takahashi M."/>
            <person name="Yamanishi K."/>
        </authorList>
    </citation>
    <scope>NUCLEOTIDE SEQUENCE [LARGE SCALE GENOMIC DNA]</scope>
    <source>
        <strain>Isolate Human/Japan/P-Oka/1970</strain>
        <strain>Oka varicella vaccine Biken (V-Oka-Biken)</strain>
    </source>
</reference>
<reference key="2">
    <citation type="journal article" date="2008" name="J. Virol.">
        <title>Complete DNA sequences of two oka strain varicella-zoster virus genomes.</title>
        <authorList>
            <person name="Tillieux S.L."/>
            <person name="Halsey W.S."/>
            <person name="Thomas E.S."/>
            <person name="Voycik J.J."/>
            <person name="Sathe G.M."/>
            <person name="Vassilev V."/>
        </authorList>
    </citation>
    <scope>NUCLEOTIDE SEQUENCE [LARGE SCALE GENOMIC DNA]</scope>
    <source>
        <strain>Oka varicella vaccine VarilRix (V-Oka-GSK)</strain>
        <strain>Oka varicella vaccine Varivax (V-Oka-Merck)</strain>
    </source>
</reference>
<reference key="3">
    <citation type="journal article" date="2008" name="Virology">
        <title>Varicella-zoster virus ORF1 gene product is a tail-anchored membrane protein localized to plasma membrane and trans-Golgi network in infected cells.</title>
        <authorList>
            <person name="Koshizuka T."/>
            <person name="Sadaoka T."/>
            <person name="Yoshii H."/>
            <person name="Yamanishi K."/>
            <person name="Mori Y."/>
        </authorList>
    </citation>
    <scope>SUBCELLULAR LOCATION</scope>
    <scope>PHOSPHORYLATION</scope>
    <scope>SUBUNIT</scope>
    <scope>TOPOLOGY</scope>
</reference>
<proteinExistence type="evidence at protein level"/>
<accession>Q4JQX4</accession>
<comment type="subunit">
    <text evidence="3">Homodimer.</text>
</comment>
<comment type="subcellular location">
    <subcellularLocation>
        <location evidence="1">Virion membrane</location>
        <topology evidence="1">Single-pass type II membrane protein</topology>
    </subcellularLocation>
    <subcellularLocation>
        <location evidence="1">Host Golgi apparatus membrane</location>
        <topology evidence="1">Single-pass type II membrane protein</topology>
    </subcellularLocation>
</comment>
<comment type="PTM">
    <text evidence="3">Phosphorylated.</text>
</comment>
<comment type="similarity">
    <text evidence="4">Belongs to the varicellovirus ORF1 protein family.</text>
</comment>
<gene>
    <name type="ORF">ORF1</name>
</gene>